<comment type="function">
    <text evidence="1">Involved in the regulation of the intracellular balance of NAD and NADP, and is a key enzyme in the biosynthesis of NADP. Catalyzes specifically the phosphorylation on 2'-hydroxyl of the adenosine moiety of NAD to yield NADP.</text>
</comment>
<comment type="catalytic activity">
    <reaction evidence="1">
        <text>NAD(+) + ATP = ADP + NADP(+) + H(+)</text>
        <dbReference type="Rhea" id="RHEA:18629"/>
        <dbReference type="ChEBI" id="CHEBI:15378"/>
        <dbReference type="ChEBI" id="CHEBI:30616"/>
        <dbReference type="ChEBI" id="CHEBI:57540"/>
        <dbReference type="ChEBI" id="CHEBI:58349"/>
        <dbReference type="ChEBI" id="CHEBI:456216"/>
        <dbReference type="EC" id="2.7.1.23"/>
    </reaction>
</comment>
<comment type="cofactor">
    <cofactor evidence="1">
        <name>a divalent metal cation</name>
        <dbReference type="ChEBI" id="CHEBI:60240"/>
    </cofactor>
</comment>
<comment type="subcellular location">
    <subcellularLocation>
        <location evidence="1">Cytoplasm</location>
    </subcellularLocation>
</comment>
<comment type="similarity">
    <text evidence="1">Belongs to the NAD kinase family.</text>
</comment>
<comment type="sequence caution" evidence="2">
    <conflict type="erroneous initiation">
        <sequence resource="EMBL-CDS" id="AAL52217"/>
    </conflict>
    <text>Extended N-terminus.</text>
</comment>
<proteinExistence type="inferred from homology"/>
<dbReference type="EC" id="2.7.1.23" evidence="1"/>
<dbReference type="EMBL" id="AE008917">
    <property type="protein sequence ID" value="AAL52217.1"/>
    <property type="status" value="ALT_INIT"/>
    <property type="molecule type" value="Genomic_DNA"/>
</dbReference>
<dbReference type="PIR" id="AF3381">
    <property type="entry name" value="AF3381"/>
</dbReference>
<dbReference type="RefSeq" id="WP_002964061.1">
    <property type="nucleotide sequence ID" value="NZ_GG703778.1"/>
</dbReference>
<dbReference type="SMR" id="Q8YGW9"/>
<dbReference type="KEGG" id="bme:BMEI1036"/>
<dbReference type="KEGG" id="bmel:DK63_380"/>
<dbReference type="PATRIC" id="fig|224914.52.peg.396"/>
<dbReference type="eggNOG" id="COG0061">
    <property type="taxonomic scope" value="Bacteria"/>
</dbReference>
<dbReference type="PhylomeDB" id="Q8YGW9"/>
<dbReference type="Proteomes" id="UP000000419">
    <property type="component" value="Chromosome I"/>
</dbReference>
<dbReference type="GO" id="GO:0005737">
    <property type="term" value="C:cytoplasm"/>
    <property type="evidence" value="ECO:0007669"/>
    <property type="project" value="UniProtKB-SubCell"/>
</dbReference>
<dbReference type="GO" id="GO:0005524">
    <property type="term" value="F:ATP binding"/>
    <property type="evidence" value="ECO:0007669"/>
    <property type="project" value="UniProtKB-KW"/>
</dbReference>
<dbReference type="GO" id="GO:0046872">
    <property type="term" value="F:metal ion binding"/>
    <property type="evidence" value="ECO:0007669"/>
    <property type="project" value="UniProtKB-UniRule"/>
</dbReference>
<dbReference type="GO" id="GO:0051287">
    <property type="term" value="F:NAD binding"/>
    <property type="evidence" value="ECO:0007669"/>
    <property type="project" value="UniProtKB-ARBA"/>
</dbReference>
<dbReference type="GO" id="GO:0003951">
    <property type="term" value="F:NAD+ kinase activity"/>
    <property type="evidence" value="ECO:0007669"/>
    <property type="project" value="UniProtKB-UniRule"/>
</dbReference>
<dbReference type="GO" id="GO:0019674">
    <property type="term" value="P:NAD metabolic process"/>
    <property type="evidence" value="ECO:0007669"/>
    <property type="project" value="InterPro"/>
</dbReference>
<dbReference type="GO" id="GO:0006741">
    <property type="term" value="P:NADP biosynthetic process"/>
    <property type="evidence" value="ECO:0007669"/>
    <property type="project" value="UniProtKB-UniRule"/>
</dbReference>
<dbReference type="Gene3D" id="3.40.50.10330">
    <property type="entry name" value="Probable inorganic polyphosphate/atp-NAD kinase, domain 1"/>
    <property type="match status" value="1"/>
</dbReference>
<dbReference type="Gene3D" id="2.60.200.30">
    <property type="entry name" value="Probable inorganic polyphosphate/atp-NAD kinase, domain 2"/>
    <property type="match status" value="1"/>
</dbReference>
<dbReference type="HAMAP" id="MF_00361">
    <property type="entry name" value="NAD_kinase"/>
    <property type="match status" value="1"/>
</dbReference>
<dbReference type="InterPro" id="IPR017438">
    <property type="entry name" value="ATP-NAD_kinase_N"/>
</dbReference>
<dbReference type="InterPro" id="IPR017437">
    <property type="entry name" value="ATP-NAD_kinase_PpnK-typ_C"/>
</dbReference>
<dbReference type="InterPro" id="IPR016064">
    <property type="entry name" value="NAD/diacylglycerol_kinase_sf"/>
</dbReference>
<dbReference type="InterPro" id="IPR002504">
    <property type="entry name" value="NADK"/>
</dbReference>
<dbReference type="NCBIfam" id="NF003406">
    <property type="entry name" value="PRK04761.1"/>
    <property type="match status" value="1"/>
</dbReference>
<dbReference type="PANTHER" id="PTHR20275">
    <property type="entry name" value="NAD KINASE"/>
    <property type="match status" value="1"/>
</dbReference>
<dbReference type="PANTHER" id="PTHR20275:SF0">
    <property type="entry name" value="NAD KINASE"/>
    <property type="match status" value="1"/>
</dbReference>
<dbReference type="Pfam" id="PF01513">
    <property type="entry name" value="NAD_kinase"/>
    <property type="match status" value="1"/>
</dbReference>
<dbReference type="Pfam" id="PF20143">
    <property type="entry name" value="NAD_kinase_C"/>
    <property type="match status" value="1"/>
</dbReference>
<dbReference type="SUPFAM" id="SSF111331">
    <property type="entry name" value="NAD kinase/diacylglycerol kinase-like"/>
    <property type="match status" value="1"/>
</dbReference>
<keyword id="KW-0067">ATP-binding</keyword>
<keyword id="KW-0963">Cytoplasm</keyword>
<keyword id="KW-0418">Kinase</keyword>
<keyword id="KW-0520">NAD</keyword>
<keyword id="KW-0521">NADP</keyword>
<keyword id="KW-0547">Nucleotide-binding</keyword>
<keyword id="KW-0808">Transferase</keyword>
<protein>
    <recommendedName>
        <fullName evidence="1">NAD kinase</fullName>
        <ecNumber evidence="1">2.7.1.23</ecNumber>
    </recommendedName>
    <alternativeName>
        <fullName evidence="1">ATP-dependent NAD kinase</fullName>
    </alternativeName>
</protein>
<name>NADK_BRUME</name>
<reference key="1">
    <citation type="journal article" date="2002" name="Proc. Natl. Acad. Sci. U.S.A.">
        <title>The genome sequence of the facultative intracellular pathogen Brucella melitensis.</title>
        <authorList>
            <person name="DelVecchio V.G."/>
            <person name="Kapatral V."/>
            <person name="Redkar R.J."/>
            <person name="Patra G."/>
            <person name="Mujer C."/>
            <person name="Los T."/>
            <person name="Ivanova N."/>
            <person name="Anderson I."/>
            <person name="Bhattacharyya A."/>
            <person name="Lykidis A."/>
            <person name="Reznik G."/>
            <person name="Jablonski L."/>
            <person name="Larsen N."/>
            <person name="D'Souza M."/>
            <person name="Bernal A."/>
            <person name="Mazur M."/>
            <person name="Goltsman E."/>
            <person name="Selkov E."/>
            <person name="Elzer P.H."/>
            <person name="Hagius S."/>
            <person name="O'Callaghan D."/>
            <person name="Letesson J.-J."/>
            <person name="Haselkorn R."/>
            <person name="Kyrpides N.C."/>
            <person name="Overbeek R."/>
        </authorList>
    </citation>
    <scope>NUCLEOTIDE SEQUENCE [LARGE SCALE GENOMIC DNA]</scope>
    <source>
        <strain>ATCC 23456 / CCUG 17765 / NCTC 10094 / 16M</strain>
    </source>
</reference>
<evidence type="ECO:0000255" key="1">
    <source>
        <dbReference type="HAMAP-Rule" id="MF_00361"/>
    </source>
</evidence>
<evidence type="ECO:0000305" key="2"/>
<feature type="chain" id="PRO_0000120603" description="NAD kinase">
    <location>
        <begin position="1"/>
        <end position="257"/>
    </location>
</feature>
<feature type="active site" description="Proton acceptor" evidence="1">
    <location>
        <position position="46"/>
    </location>
</feature>
<feature type="binding site" evidence="1">
    <location>
        <begin position="46"/>
        <end position="47"/>
    </location>
    <ligand>
        <name>NAD(+)</name>
        <dbReference type="ChEBI" id="CHEBI:57540"/>
    </ligand>
</feature>
<feature type="binding site" evidence="1">
    <location>
        <begin position="116"/>
        <end position="117"/>
    </location>
    <ligand>
        <name>NAD(+)</name>
        <dbReference type="ChEBI" id="CHEBI:57540"/>
    </ligand>
</feature>
<feature type="binding site" evidence="1">
    <location>
        <position position="146"/>
    </location>
    <ligand>
        <name>NAD(+)</name>
        <dbReference type="ChEBI" id="CHEBI:57540"/>
    </ligand>
</feature>
<feature type="binding site" evidence="1">
    <location>
        <position position="154"/>
    </location>
    <ligand>
        <name>NAD(+)</name>
        <dbReference type="ChEBI" id="CHEBI:57540"/>
    </ligand>
</feature>
<feature type="binding site" evidence="1">
    <location>
        <begin position="157"/>
        <end position="162"/>
    </location>
    <ligand>
        <name>NAD(+)</name>
        <dbReference type="ChEBI" id="CHEBI:57540"/>
    </ligand>
</feature>
<feature type="binding site" evidence="1">
    <location>
        <position position="218"/>
    </location>
    <ligand>
        <name>NAD(+)</name>
        <dbReference type="ChEBI" id="CHEBI:57540"/>
    </ligand>
</feature>
<organism>
    <name type="scientific">Brucella melitensis biotype 1 (strain ATCC 23456 / CCUG 17765 / NCTC 10094 / 16M)</name>
    <dbReference type="NCBI Taxonomy" id="224914"/>
    <lineage>
        <taxon>Bacteria</taxon>
        <taxon>Pseudomonadati</taxon>
        <taxon>Pseudomonadota</taxon>
        <taxon>Alphaproteobacteria</taxon>
        <taxon>Hyphomicrobiales</taxon>
        <taxon>Brucellaceae</taxon>
        <taxon>Brucella/Ochrobactrum group</taxon>
        <taxon>Brucella</taxon>
    </lineage>
</organism>
<sequence length="257" mass="28261">MKDTSLALHFVSSGTKESLSAQKDLVERYGHVAAEDADIIVALGGDGTMLQALRDFMNTGKPIYGMNRGSVGFLMNEFVIENLPERILAAQMETIRPLVMVAETDDAPPVEALAINEVSLFRQSYQAARIRITIDGKVRLQELVCDGVMVATPAGSTAYNLSAQGPILPLEAPLLALTPVSPFRPRRWGGALLPKHVTVRMDLLETEKRPVNAVADNNEVKSVTSVTVREAPNSQVTILFDKNHSWDERILTEQFRH</sequence>
<gene>
    <name evidence="1" type="primary">nadK</name>
    <name type="ordered locus">BMEI1036</name>
</gene>
<accession>Q8YGW9</accession>